<protein>
    <recommendedName>
        <fullName evidence="1">Argininosuccinate lyase</fullName>
        <shortName evidence="1">ASAL</shortName>
        <ecNumber evidence="1">4.3.2.1</ecNumber>
    </recommendedName>
    <alternativeName>
        <fullName evidence="1">Arginosuccinase</fullName>
    </alternativeName>
</protein>
<keyword id="KW-0028">Amino-acid biosynthesis</keyword>
<keyword id="KW-0055">Arginine biosynthesis</keyword>
<keyword id="KW-0963">Cytoplasm</keyword>
<keyword id="KW-0456">Lyase</keyword>
<comment type="catalytic activity">
    <reaction evidence="1">
        <text>2-(N(omega)-L-arginino)succinate = fumarate + L-arginine</text>
        <dbReference type="Rhea" id="RHEA:24020"/>
        <dbReference type="ChEBI" id="CHEBI:29806"/>
        <dbReference type="ChEBI" id="CHEBI:32682"/>
        <dbReference type="ChEBI" id="CHEBI:57472"/>
        <dbReference type="EC" id="4.3.2.1"/>
    </reaction>
</comment>
<comment type="pathway">
    <text evidence="1">Amino-acid biosynthesis; L-arginine biosynthesis; L-arginine from L-ornithine and carbamoyl phosphate: step 3/3.</text>
</comment>
<comment type="subcellular location">
    <subcellularLocation>
        <location evidence="1">Cytoplasm</location>
    </subcellularLocation>
</comment>
<comment type="similarity">
    <text evidence="1">Belongs to the lyase 1 family. Argininosuccinate lyase subfamily.</text>
</comment>
<gene>
    <name evidence="1" type="primary">argH</name>
    <name type="ordered locus">BF0457</name>
</gene>
<dbReference type="EC" id="4.3.2.1" evidence="1"/>
<dbReference type="EMBL" id="CR626927">
    <property type="protein sequence ID" value="CAH06218.1"/>
    <property type="molecule type" value="Genomic_DNA"/>
</dbReference>
<dbReference type="RefSeq" id="WP_010992049.1">
    <property type="nucleotide sequence ID" value="NC_003228.3"/>
</dbReference>
<dbReference type="SMR" id="Q5LI10"/>
<dbReference type="PaxDb" id="272559-BF9343_0439"/>
<dbReference type="GeneID" id="60368511"/>
<dbReference type="KEGG" id="bfs:BF9343_0439"/>
<dbReference type="eggNOG" id="COG0165">
    <property type="taxonomic scope" value="Bacteria"/>
</dbReference>
<dbReference type="HOGENOM" id="CLU_027272_2_0_10"/>
<dbReference type="UniPathway" id="UPA00068">
    <property type="reaction ID" value="UER00114"/>
</dbReference>
<dbReference type="Proteomes" id="UP000006731">
    <property type="component" value="Chromosome"/>
</dbReference>
<dbReference type="GO" id="GO:0005829">
    <property type="term" value="C:cytosol"/>
    <property type="evidence" value="ECO:0007669"/>
    <property type="project" value="TreeGrafter"/>
</dbReference>
<dbReference type="GO" id="GO:0004056">
    <property type="term" value="F:argininosuccinate lyase activity"/>
    <property type="evidence" value="ECO:0007669"/>
    <property type="project" value="UniProtKB-UniRule"/>
</dbReference>
<dbReference type="GO" id="GO:0042450">
    <property type="term" value="P:arginine biosynthetic process via ornithine"/>
    <property type="evidence" value="ECO:0007669"/>
    <property type="project" value="InterPro"/>
</dbReference>
<dbReference type="GO" id="GO:0006526">
    <property type="term" value="P:L-arginine biosynthetic process"/>
    <property type="evidence" value="ECO:0007669"/>
    <property type="project" value="UniProtKB-UniRule"/>
</dbReference>
<dbReference type="CDD" id="cd01359">
    <property type="entry name" value="Argininosuccinate_lyase"/>
    <property type="match status" value="1"/>
</dbReference>
<dbReference type="Gene3D" id="1.10.40.30">
    <property type="entry name" value="Fumarase/aspartase (C-terminal domain)"/>
    <property type="match status" value="1"/>
</dbReference>
<dbReference type="Gene3D" id="1.20.200.10">
    <property type="entry name" value="Fumarase/aspartase (Central domain)"/>
    <property type="match status" value="1"/>
</dbReference>
<dbReference type="Gene3D" id="1.10.275.10">
    <property type="entry name" value="Fumarase/aspartase (N-terminal domain)"/>
    <property type="match status" value="1"/>
</dbReference>
<dbReference type="HAMAP" id="MF_00006">
    <property type="entry name" value="Arg_succ_lyase"/>
    <property type="match status" value="1"/>
</dbReference>
<dbReference type="InterPro" id="IPR009049">
    <property type="entry name" value="Argininosuccinate_lyase"/>
</dbReference>
<dbReference type="InterPro" id="IPR024083">
    <property type="entry name" value="Fumarase/histidase_N"/>
</dbReference>
<dbReference type="InterPro" id="IPR020557">
    <property type="entry name" value="Fumarate_lyase_CS"/>
</dbReference>
<dbReference type="InterPro" id="IPR000362">
    <property type="entry name" value="Fumarate_lyase_fam"/>
</dbReference>
<dbReference type="InterPro" id="IPR022761">
    <property type="entry name" value="Fumarate_lyase_N"/>
</dbReference>
<dbReference type="InterPro" id="IPR008948">
    <property type="entry name" value="L-Aspartase-like"/>
</dbReference>
<dbReference type="NCBIfam" id="TIGR00838">
    <property type="entry name" value="argH"/>
    <property type="match status" value="1"/>
</dbReference>
<dbReference type="PANTHER" id="PTHR43814">
    <property type="entry name" value="ARGININOSUCCINATE LYASE"/>
    <property type="match status" value="1"/>
</dbReference>
<dbReference type="PANTHER" id="PTHR43814:SF1">
    <property type="entry name" value="ARGININOSUCCINATE LYASE"/>
    <property type="match status" value="1"/>
</dbReference>
<dbReference type="Pfam" id="PF00206">
    <property type="entry name" value="Lyase_1"/>
    <property type="match status" value="1"/>
</dbReference>
<dbReference type="PRINTS" id="PR00145">
    <property type="entry name" value="ARGSUCLYASE"/>
</dbReference>
<dbReference type="PRINTS" id="PR00149">
    <property type="entry name" value="FUMRATELYASE"/>
</dbReference>
<dbReference type="SUPFAM" id="SSF48557">
    <property type="entry name" value="L-aspartase-like"/>
    <property type="match status" value="1"/>
</dbReference>
<dbReference type="PROSITE" id="PS00163">
    <property type="entry name" value="FUMARATE_LYASES"/>
    <property type="match status" value="1"/>
</dbReference>
<name>ARLY_BACFN</name>
<proteinExistence type="inferred from homology"/>
<evidence type="ECO:0000255" key="1">
    <source>
        <dbReference type="HAMAP-Rule" id="MF_00006"/>
    </source>
</evidence>
<accession>Q5LI10</accession>
<organism>
    <name type="scientific">Bacteroides fragilis (strain ATCC 25285 / DSM 2151 / CCUG 4856 / JCM 11019 / LMG 10263 / NCTC 9343 / Onslow / VPI 2553 / EN-2)</name>
    <dbReference type="NCBI Taxonomy" id="272559"/>
    <lineage>
        <taxon>Bacteria</taxon>
        <taxon>Pseudomonadati</taxon>
        <taxon>Bacteroidota</taxon>
        <taxon>Bacteroidia</taxon>
        <taxon>Bacteroidales</taxon>
        <taxon>Bacteroidaceae</taxon>
        <taxon>Bacteroides</taxon>
    </lineage>
</organism>
<feature type="chain" id="PRO_1000116307" description="Argininosuccinate lyase">
    <location>
        <begin position="1"/>
        <end position="447"/>
    </location>
</feature>
<reference key="1">
    <citation type="journal article" date="2005" name="Science">
        <title>Extensive DNA inversions in the B. fragilis genome control variable gene expression.</title>
        <authorList>
            <person name="Cerdeno-Tarraga A.-M."/>
            <person name="Patrick S."/>
            <person name="Crossman L.C."/>
            <person name="Blakely G."/>
            <person name="Abratt V."/>
            <person name="Lennard N."/>
            <person name="Poxton I."/>
            <person name="Duerden B."/>
            <person name="Harris B."/>
            <person name="Quail M.A."/>
            <person name="Barron A."/>
            <person name="Clark L."/>
            <person name="Corton C."/>
            <person name="Doggett J."/>
            <person name="Holden M.T.G."/>
            <person name="Larke N."/>
            <person name="Line A."/>
            <person name="Lord A."/>
            <person name="Norbertczak H."/>
            <person name="Ormond D."/>
            <person name="Price C."/>
            <person name="Rabbinowitsch E."/>
            <person name="Woodward J."/>
            <person name="Barrell B.G."/>
            <person name="Parkhill J."/>
        </authorList>
    </citation>
    <scope>NUCLEOTIDE SEQUENCE [LARGE SCALE GENOMIC DNA]</scope>
    <source>
        <strain>ATCC 25285 / DSM 2151 / CCUG 4856 / JCM 11019 / LMG 10263 / NCTC 9343 / Onslow / VPI 2553 / EN-2</strain>
    </source>
</reference>
<sequence length="447" mass="50795">MAQKLWEKSVEVNKDIERFTVGRDREMDLYLAKHDVLGSMAHITMLESIGLLTKEELAQLLTELKDIYASAERGEFVIEEGVEDVHSQVELMLTRRLGDVGKKIHSGRSRNDQVLLDLKLFTRTQIREVAEAVEQLFHVLIRQSERYKNVLMPGYTHLQIAMPSSFGLWFGAYAESLVDDMLFLQAAFKMCNKNPLGSAAGYGSSFPLNRTMTTELLGFDSLNYNVVYAQMGRGKMERNVAFALATLAGTISKLAFDACIFNSQNFGFVKLPDECTTGSSIMPHKKNPDVFELTRAKCNKLQSLPQQIMMIANNLPSGYFRDLQIIKEVFLPAFQELKDCLQMTTYIMNEIKVNEHILDDDKYLFIFSVEEVNRLAREGMPFRDAYKKVGLDIEAGHFSHDKQVHHTHEGSIGNLCNDEISALMQRTIEGFNFQGMEQAEKTLLGRK</sequence>